<evidence type="ECO:0000255" key="1">
    <source>
        <dbReference type="HAMAP-Rule" id="MF_00300"/>
    </source>
</evidence>
<feature type="chain" id="PRO_1000022487" description="Chorismate synthase">
    <location>
        <begin position="1"/>
        <end position="355"/>
    </location>
</feature>
<feature type="binding site" evidence="1">
    <location>
        <position position="48"/>
    </location>
    <ligand>
        <name>NADP(+)</name>
        <dbReference type="ChEBI" id="CHEBI:58349"/>
    </ligand>
</feature>
<feature type="binding site" evidence="1">
    <location>
        <begin position="125"/>
        <end position="127"/>
    </location>
    <ligand>
        <name>FMN</name>
        <dbReference type="ChEBI" id="CHEBI:58210"/>
    </ligand>
</feature>
<feature type="binding site" evidence="1">
    <location>
        <begin position="239"/>
        <end position="240"/>
    </location>
    <ligand>
        <name>FMN</name>
        <dbReference type="ChEBI" id="CHEBI:58210"/>
    </ligand>
</feature>
<feature type="binding site" evidence="1">
    <location>
        <position position="280"/>
    </location>
    <ligand>
        <name>FMN</name>
        <dbReference type="ChEBI" id="CHEBI:58210"/>
    </ligand>
</feature>
<feature type="binding site" evidence="1">
    <location>
        <begin position="295"/>
        <end position="299"/>
    </location>
    <ligand>
        <name>FMN</name>
        <dbReference type="ChEBI" id="CHEBI:58210"/>
    </ligand>
</feature>
<feature type="binding site" evidence="1">
    <location>
        <position position="321"/>
    </location>
    <ligand>
        <name>FMN</name>
        <dbReference type="ChEBI" id="CHEBI:58210"/>
    </ligand>
</feature>
<sequence length="355" mass="38836">MSGNSYGKIFKITTFGESHGEALGGIIDGCPPNIILDLDAIQIEMQRRKPGQSSIVTQRKEADEVQFLSGIFEGKTTGTPIGFIIKNTNQKSDDYSHIKDSYRPSHADYVYEKKYRIRDYRGGGRSSARETASRVVAGAIAKQVIPEIKINAFVSSVGDISLDKPYQDLNFSLTETNAVRCPDLASAEKMENYIKEIKKQGDTVGGTITCVIQNVPIGLGEPVFDKLHAELGKAMLSINAVKGFEYGSGFCGAKMKGSNHNDPYNQDGTTRTNLSGGIQGGISNGMDIYFRIAFKPVATLIQKQEVLTNTNEIIEQQGKGRHDPCVVPRAVPIVEAMAAIVMADFFLLNKIYNNH</sequence>
<protein>
    <recommendedName>
        <fullName evidence="1">Chorismate synthase</fullName>
        <shortName evidence="1">CS</shortName>
        <ecNumber evidence="1">4.2.3.5</ecNumber>
    </recommendedName>
    <alternativeName>
        <fullName evidence="1">5-enolpyruvylshikimate-3-phosphate phospholyase</fullName>
    </alternativeName>
</protein>
<reference key="1">
    <citation type="journal article" date="2007" name="Nat. Biotechnol.">
        <title>Complete genome sequence of the fish pathogen Flavobacterium psychrophilum.</title>
        <authorList>
            <person name="Duchaud E."/>
            <person name="Boussaha M."/>
            <person name="Loux V."/>
            <person name="Bernardet J.-F."/>
            <person name="Michel C."/>
            <person name="Kerouault B."/>
            <person name="Mondot S."/>
            <person name="Nicolas P."/>
            <person name="Bossy R."/>
            <person name="Caron C."/>
            <person name="Bessieres P."/>
            <person name="Gibrat J.-F."/>
            <person name="Claverol S."/>
            <person name="Dumetz F."/>
            <person name="Le Henaff M."/>
            <person name="Benmansour A."/>
        </authorList>
    </citation>
    <scope>NUCLEOTIDE SEQUENCE [LARGE SCALE GENOMIC DNA]</scope>
    <source>
        <strain>ATCC 49511 / DSM 21280 / CIP 103535 / JIP02/86</strain>
    </source>
</reference>
<dbReference type="EC" id="4.2.3.5" evidence="1"/>
<dbReference type="EMBL" id="AM398681">
    <property type="protein sequence ID" value="CAL42868.1"/>
    <property type="molecule type" value="Genomic_DNA"/>
</dbReference>
<dbReference type="RefSeq" id="WP_011962924.1">
    <property type="nucleotide sequence ID" value="NC_009613.3"/>
</dbReference>
<dbReference type="RefSeq" id="YP_001295684.1">
    <property type="nucleotide sequence ID" value="NC_009613.3"/>
</dbReference>
<dbReference type="SMR" id="A6GXP5"/>
<dbReference type="STRING" id="402612.FP0765"/>
<dbReference type="EnsemblBacteria" id="CAL42868">
    <property type="protein sequence ID" value="CAL42868"/>
    <property type="gene ID" value="FP0765"/>
</dbReference>
<dbReference type="GeneID" id="66552554"/>
<dbReference type="KEGG" id="fps:FP0765"/>
<dbReference type="PATRIC" id="fig|402612.5.peg.784"/>
<dbReference type="eggNOG" id="COG0082">
    <property type="taxonomic scope" value="Bacteria"/>
</dbReference>
<dbReference type="HOGENOM" id="CLU_034547_0_2_10"/>
<dbReference type="OrthoDB" id="9771806at2"/>
<dbReference type="UniPathway" id="UPA00053">
    <property type="reaction ID" value="UER00090"/>
</dbReference>
<dbReference type="Proteomes" id="UP000006394">
    <property type="component" value="Chromosome"/>
</dbReference>
<dbReference type="GO" id="GO:0005829">
    <property type="term" value="C:cytosol"/>
    <property type="evidence" value="ECO:0007669"/>
    <property type="project" value="TreeGrafter"/>
</dbReference>
<dbReference type="GO" id="GO:0004107">
    <property type="term" value="F:chorismate synthase activity"/>
    <property type="evidence" value="ECO:0007669"/>
    <property type="project" value="UniProtKB-UniRule"/>
</dbReference>
<dbReference type="GO" id="GO:0010181">
    <property type="term" value="F:FMN binding"/>
    <property type="evidence" value="ECO:0007669"/>
    <property type="project" value="TreeGrafter"/>
</dbReference>
<dbReference type="GO" id="GO:0008652">
    <property type="term" value="P:amino acid biosynthetic process"/>
    <property type="evidence" value="ECO:0007669"/>
    <property type="project" value="UniProtKB-KW"/>
</dbReference>
<dbReference type="GO" id="GO:0009073">
    <property type="term" value="P:aromatic amino acid family biosynthetic process"/>
    <property type="evidence" value="ECO:0007669"/>
    <property type="project" value="UniProtKB-KW"/>
</dbReference>
<dbReference type="GO" id="GO:0009423">
    <property type="term" value="P:chorismate biosynthetic process"/>
    <property type="evidence" value="ECO:0007669"/>
    <property type="project" value="UniProtKB-UniRule"/>
</dbReference>
<dbReference type="CDD" id="cd07304">
    <property type="entry name" value="Chorismate_synthase"/>
    <property type="match status" value="1"/>
</dbReference>
<dbReference type="FunFam" id="3.60.150.10:FF:000003">
    <property type="entry name" value="Chorismate synthase"/>
    <property type="match status" value="1"/>
</dbReference>
<dbReference type="Gene3D" id="3.60.150.10">
    <property type="entry name" value="Chorismate synthase AroC"/>
    <property type="match status" value="1"/>
</dbReference>
<dbReference type="HAMAP" id="MF_00300">
    <property type="entry name" value="Chorismate_synth"/>
    <property type="match status" value="1"/>
</dbReference>
<dbReference type="InterPro" id="IPR000453">
    <property type="entry name" value="Chorismate_synth"/>
</dbReference>
<dbReference type="InterPro" id="IPR035904">
    <property type="entry name" value="Chorismate_synth_AroC_sf"/>
</dbReference>
<dbReference type="InterPro" id="IPR020541">
    <property type="entry name" value="Chorismate_synthase_CS"/>
</dbReference>
<dbReference type="NCBIfam" id="TIGR00033">
    <property type="entry name" value="aroC"/>
    <property type="match status" value="1"/>
</dbReference>
<dbReference type="NCBIfam" id="NF003793">
    <property type="entry name" value="PRK05382.1"/>
    <property type="match status" value="1"/>
</dbReference>
<dbReference type="PANTHER" id="PTHR21085">
    <property type="entry name" value="CHORISMATE SYNTHASE"/>
    <property type="match status" value="1"/>
</dbReference>
<dbReference type="PANTHER" id="PTHR21085:SF0">
    <property type="entry name" value="CHORISMATE SYNTHASE"/>
    <property type="match status" value="1"/>
</dbReference>
<dbReference type="Pfam" id="PF01264">
    <property type="entry name" value="Chorismate_synt"/>
    <property type="match status" value="1"/>
</dbReference>
<dbReference type="PIRSF" id="PIRSF001456">
    <property type="entry name" value="Chorismate_synth"/>
    <property type="match status" value="1"/>
</dbReference>
<dbReference type="SUPFAM" id="SSF103263">
    <property type="entry name" value="Chorismate synthase, AroC"/>
    <property type="match status" value="1"/>
</dbReference>
<dbReference type="PROSITE" id="PS00787">
    <property type="entry name" value="CHORISMATE_SYNTHASE_1"/>
    <property type="match status" value="1"/>
</dbReference>
<dbReference type="PROSITE" id="PS00788">
    <property type="entry name" value="CHORISMATE_SYNTHASE_2"/>
    <property type="match status" value="1"/>
</dbReference>
<dbReference type="PROSITE" id="PS00789">
    <property type="entry name" value="CHORISMATE_SYNTHASE_3"/>
    <property type="match status" value="1"/>
</dbReference>
<name>AROC_FLAPJ</name>
<keyword id="KW-0028">Amino-acid biosynthesis</keyword>
<keyword id="KW-0057">Aromatic amino acid biosynthesis</keyword>
<keyword id="KW-0274">FAD</keyword>
<keyword id="KW-0285">Flavoprotein</keyword>
<keyword id="KW-0288">FMN</keyword>
<keyword id="KW-0456">Lyase</keyword>
<keyword id="KW-0521">NADP</keyword>
<keyword id="KW-1185">Reference proteome</keyword>
<gene>
    <name evidence="1" type="primary">aroC</name>
    <name type="ordered locus">FP0765</name>
</gene>
<accession>A6GXP5</accession>
<comment type="function">
    <text evidence="1">Catalyzes the anti-1,4-elimination of the C-3 phosphate and the C-6 proR hydrogen from 5-enolpyruvylshikimate-3-phosphate (EPSP) to yield chorismate, which is the branch point compound that serves as the starting substrate for the three terminal pathways of aromatic amino acid biosynthesis. This reaction introduces a second double bond into the aromatic ring system.</text>
</comment>
<comment type="catalytic activity">
    <reaction evidence="1">
        <text>5-O-(1-carboxyvinyl)-3-phosphoshikimate = chorismate + phosphate</text>
        <dbReference type="Rhea" id="RHEA:21020"/>
        <dbReference type="ChEBI" id="CHEBI:29748"/>
        <dbReference type="ChEBI" id="CHEBI:43474"/>
        <dbReference type="ChEBI" id="CHEBI:57701"/>
        <dbReference type="EC" id="4.2.3.5"/>
    </reaction>
</comment>
<comment type="cofactor">
    <cofactor evidence="1">
        <name>FMNH2</name>
        <dbReference type="ChEBI" id="CHEBI:57618"/>
    </cofactor>
    <text evidence="1">Reduced FMN (FMNH(2)).</text>
</comment>
<comment type="pathway">
    <text evidence="1">Metabolic intermediate biosynthesis; chorismate biosynthesis; chorismate from D-erythrose 4-phosphate and phosphoenolpyruvate: step 7/7.</text>
</comment>
<comment type="subunit">
    <text evidence="1">Homotetramer.</text>
</comment>
<comment type="similarity">
    <text evidence="1">Belongs to the chorismate synthase family.</text>
</comment>
<organism>
    <name type="scientific">Flavobacterium psychrophilum (strain ATCC 49511 / DSM 21280 / CIP 103535 / JIP02/86)</name>
    <dbReference type="NCBI Taxonomy" id="402612"/>
    <lineage>
        <taxon>Bacteria</taxon>
        <taxon>Pseudomonadati</taxon>
        <taxon>Bacteroidota</taxon>
        <taxon>Flavobacteriia</taxon>
        <taxon>Flavobacteriales</taxon>
        <taxon>Flavobacteriaceae</taxon>
        <taxon>Flavobacterium</taxon>
    </lineage>
</organism>
<proteinExistence type="inferred from homology"/>